<accession>P10144</accession>
<accession>Q8N1D2</accession>
<accession>Q9UCC1</accession>
<name>GRAB_HUMAN</name>
<reference key="1">
    <citation type="journal article" date="1987" name="J. Immunol.">
        <title>Induction of mRNA for a serine protease and a beta-thromboglobulin-like protein in mitogen-stimulated human leukocytes.</title>
        <authorList>
            <person name="Schmid J."/>
            <person name="Weissmann C."/>
        </authorList>
    </citation>
    <scope>NUCLEOTIDE SEQUENCE [MRNA]</scope>
    <scope>VARIANT GLN-55</scope>
</reference>
<reference key="2">
    <citation type="journal article" date="1988" name="J. Biol. Chem.">
        <title>Structure and differential mechanisms of regulation of expression of a serine esterase gene in activated human T lymphocytes.</title>
        <authorList>
            <person name="Caputo A."/>
            <person name="Fahey D."/>
            <person name="Lloyd C."/>
            <person name="Vozab R."/>
            <person name="McCairns E."/>
            <person name="Rowe P.B."/>
        </authorList>
    </citation>
    <scope>NUCLEOTIDE SEQUENCE [MRNA]</scope>
    <scope>VARIANT ALA-94</scope>
</reference>
<reference key="3">
    <citation type="journal article" date="1988" name="Proc. Natl. Acad. Sci. U.S.A.">
        <title>Molecular cloning of an inducible serine esterase gene from human cytotoxic lymphocytes.</title>
        <authorList>
            <person name="Trapani J.A."/>
            <person name="Klein J.L."/>
            <person name="White P.C."/>
            <person name="Dupont B."/>
        </authorList>
    </citation>
    <scope>NUCLEOTIDE SEQUENCE [MRNA]</scope>
    <scope>VARIANT GLN-55</scope>
</reference>
<reference key="4">
    <citation type="journal article" date="1989" name="Genomics">
        <title>Genomic organization and chromosomal assignment for a serine protease gene (CSPB) expressed by human cytotoxic lymphocytes.</title>
        <authorList>
            <person name="Klein J.L."/>
            <person name="Shows T.B."/>
            <person name="Dupont B."/>
            <person name="Trapani J.A."/>
        </authorList>
    </citation>
    <scope>NUCLEOTIDE SEQUENCE [GENOMIC DNA]</scope>
    <scope>VARIANT GLN-55</scope>
</reference>
<reference key="5">
    <citation type="journal article" date="1990" name="J. Immunol.">
        <title>Nucleotide sequence and genomic organization of a human T lymphocyte serine protease gene.</title>
        <authorList>
            <person name="Caputo A."/>
            <person name="Sauer D.E."/>
            <person name="Rowe P.B."/>
        </authorList>
    </citation>
    <scope>NUCLEOTIDE SEQUENCE [GENOMIC DNA]</scope>
    <scope>VARIANT GLN-55</scope>
</reference>
<reference key="6">
    <citation type="journal article" date="1990" name="Gene">
        <title>Structural organization of the hCTLA-1 gene encoding human granzyme B.</title>
        <authorList>
            <person name="Haddad P."/>
            <person name="Clement M.-V."/>
            <person name="Bernard O."/>
            <person name="Larsen C.-J."/>
            <person name="Degos L."/>
            <person name="Sasportes M."/>
            <person name="Mathieu-Mahul D."/>
        </authorList>
    </citation>
    <scope>NUCLEOTIDE SEQUENCE [GENOMIC DNA]</scope>
    <scope>VARIANTS GLN-55 AND ALA-94</scope>
</reference>
<reference key="7">
    <citation type="journal article" date="2003" name="Nature">
        <title>The DNA sequence and analysis of human chromosome 14.</title>
        <authorList>
            <person name="Heilig R."/>
            <person name="Eckenberg R."/>
            <person name="Petit J.-L."/>
            <person name="Fonknechten N."/>
            <person name="Da Silva C."/>
            <person name="Cattolico L."/>
            <person name="Levy M."/>
            <person name="Barbe V."/>
            <person name="De Berardinis V."/>
            <person name="Ureta-Vidal A."/>
            <person name="Pelletier E."/>
            <person name="Vico V."/>
            <person name="Anthouard V."/>
            <person name="Rowen L."/>
            <person name="Madan A."/>
            <person name="Qin S."/>
            <person name="Sun H."/>
            <person name="Du H."/>
            <person name="Pepin K."/>
            <person name="Artiguenave F."/>
            <person name="Robert C."/>
            <person name="Cruaud C."/>
            <person name="Bruels T."/>
            <person name="Jaillon O."/>
            <person name="Friedlander L."/>
            <person name="Samson G."/>
            <person name="Brottier P."/>
            <person name="Cure S."/>
            <person name="Segurens B."/>
            <person name="Aniere F."/>
            <person name="Samain S."/>
            <person name="Crespeau H."/>
            <person name="Abbasi N."/>
            <person name="Aiach N."/>
            <person name="Boscus D."/>
            <person name="Dickhoff R."/>
            <person name="Dors M."/>
            <person name="Dubois I."/>
            <person name="Friedman C."/>
            <person name="Gouyvenoux M."/>
            <person name="James R."/>
            <person name="Madan A."/>
            <person name="Mairey-Estrada B."/>
            <person name="Mangenot S."/>
            <person name="Martins N."/>
            <person name="Menard M."/>
            <person name="Oztas S."/>
            <person name="Ratcliffe A."/>
            <person name="Shaffer T."/>
            <person name="Trask B."/>
            <person name="Vacherie B."/>
            <person name="Bellemere C."/>
            <person name="Belser C."/>
            <person name="Besnard-Gonnet M."/>
            <person name="Bartol-Mavel D."/>
            <person name="Boutard M."/>
            <person name="Briez-Silla S."/>
            <person name="Combette S."/>
            <person name="Dufosse-Laurent V."/>
            <person name="Ferron C."/>
            <person name="Lechaplais C."/>
            <person name="Louesse C."/>
            <person name="Muselet D."/>
            <person name="Magdelenat G."/>
            <person name="Pateau E."/>
            <person name="Petit E."/>
            <person name="Sirvain-Trukniewicz P."/>
            <person name="Trybou A."/>
            <person name="Vega-Czarny N."/>
            <person name="Bataille E."/>
            <person name="Bluet E."/>
            <person name="Bordelais I."/>
            <person name="Dubois M."/>
            <person name="Dumont C."/>
            <person name="Guerin T."/>
            <person name="Haffray S."/>
            <person name="Hammadi R."/>
            <person name="Muanga J."/>
            <person name="Pellouin V."/>
            <person name="Robert D."/>
            <person name="Wunderle E."/>
            <person name="Gauguet G."/>
            <person name="Roy A."/>
            <person name="Sainte-Marthe L."/>
            <person name="Verdier J."/>
            <person name="Verdier-Discala C."/>
            <person name="Hillier L.W."/>
            <person name="Fulton L."/>
            <person name="McPherson J."/>
            <person name="Matsuda F."/>
            <person name="Wilson R."/>
            <person name="Scarpelli C."/>
            <person name="Gyapay G."/>
            <person name="Wincker P."/>
            <person name="Saurin W."/>
            <person name="Quetier F."/>
            <person name="Waterston R."/>
            <person name="Hood L."/>
            <person name="Weissenbach J."/>
        </authorList>
    </citation>
    <scope>NUCLEOTIDE SEQUENCE [LARGE SCALE GENOMIC DNA]</scope>
</reference>
<reference key="8">
    <citation type="journal article" date="2004" name="Genome Res.">
        <title>The status, quality, and expansion of the NIH full-length cDNA project: the Mammalian Gene Collection (MGC).</title>
        <authorList>
            <consortium name="The MGC Project Team"/>
        </authorList>
    </citation>
    <scope>NUCLEOTIDE SEQUENCE [LARGE SCALE MRNA]</scope>
    <scope>VARIANTS GLN-55 AND HIS-247</scope>
    <source>
        <tissue>Pancreas</tissue>
    </source>
</reference>
<reference key="9">
    <citation type="journal article" date="1990" name="Hum. Genet.">
        <title>Isolation of a cDNA clone encoding a novel form of granzyme B from human NK cells and mapping to chromosome 14.</title>
        <authorList>
            <person name="Dahl C.A."/>
            <person name="Bach F.H."/>
            <person name="Chan W."/>
            <person name="Huebner K."/>
            <person name="Russo G."/>
            <person name="Croce C.M."/>
            <person name="Herfurth T."/>
            <person name="Cairns J.S."/>
        </authorList>
    </citation>
    <scope>NUCLEOTIDE SEQUENCE [MRNA] OF 1-23</scope>
</reference>
<reference key="10">
    <citation type="journal article" date="1988" name="J. Immunol.">
        <title>Characterization of three serine esterases isolated from human IL-2 activated killer cells.</title>
        <authorList>
            <person name="Hameed A."/>
            <person name="Lowrey D.M."/>
            <person name="Lichtenheld M."/>
            <person name="Podack E.R."/>
        </authorList>
    </citation>
    <scope>PROTEIN SEQUENCE OF 21-40</scope>
    <scope>FUNCTION</scope>
</reference>
<reference key="11">
    <citation type="journal article" date="1988" name="J. Immunol.">
        <title>Characterization of granzymes A and B isolated from granules of cloned human cytotoxic T lymphocytes.</title>
        <authorList>
            <person name="Kraehenbuhl O."/>
            <person name="Rey C."/>
            <person name="Jenne D.E."/>
            <person name="Lanzavecchia A."/>
            <person name="Groscurth P."/>
            <person name="Carrel S."/>
            <person name="Tschopp J."/>
        </authorList>
    </citation>
    <scope>PROTEIN SEQUENCE OF 21-40</scope>
    <scope>FUNCTION</scope>
</reference>
<reference key="12">
    <citation type="journal article" date="1993" name="J. Immunol.">
        <title>Human granzyme B degrades aggrecan proteoglycan in matrix synthesized by chondrocytes.</title>
        <authorList>
            <person name="Froelich C.J."/>
            <person name="Zhang X."/>
            <person name="Turbov J."/>
            <person name="Hudig D."/>
            <person name="Winkler U."/>
            <person name="Hanna W.L."/>
        </authorList>
    </citation>
    <scope>PROTEIN SEQUENCE OF 21-39</scope>
    <scope>SUBCELLULAR LOCATION</scope>
    <scope>CATALYTIC ACTIVITY</scope>
    <scope>ACTIVITY REGULATION</scope>
    <source>
        <tissue>Lymphocyte</tissue>
    </source>
</reference>
<reference key="13">
    <citation type="journal article" date="1991" name="J. Biol. Chem.">
        <title>Human cytotoxic lymphocyte granzyme B. Its purification from granules and the characterization of substrate and inhibitor specificity.</title>
        <authorList>
            <person name="Poe M."/>
            <person name="Blake J.T."/>
            <person name="Boulton D.A."/>
            <person name="Gammon M."/>
            <person name="Sigal N.H."/>
            <person name="Wu J.K."/>
            <person name="Zweerink H.J."/>
        </authorList>
    </citation>
    <scope>PROTEIN SEQUENCE OF 21-38</scope>
    <scope>FUNCTION</scope>
    <scope>SUBCELLULAR LOCATION</scope>
    <scope>CATALYTIC ACTIVITY</scope>
</reference>
<reference key="14">
    <citation type="journal article" date="2004" name="Protein Sci.">
        <title>Signal peptide prediction based on analysis of experimentally verified cleavage sites.</title>
        <authorList>
            <person name="Zhang Z."/>
            <person name="Henzel W.J."/>
        </authorList>
    </citation>
    <scope>PROTEIN SEQUENCE OF 19-33</scope>
</reference>
<reference key="15">
    <citation type="journal article" date="1998" name="J. Biol. Chem.">
        <title>Granzyme B mimics apical caspases. Description of a unified pathway for trans-activation of executioner caspase-3 and -7.</title>
        <authorList>
            <person name="Yang X."/>
            <person name="Stennicke H.R."/>
            <person name="Wang B."/>
            <person name="Green D.R."/>
            <person name="Jaenicke R.U."/>
            <person name="Srinivasan A."/>
            <person name="Seth P."/>
            <person name="Salvesen G.S."/>
            <person name="Froelich C.J."/>
        </authorList>
    </citation>
    <scope>FUNCTION</scope>
    <scope>CATALYTIC ACTIVITY</scope>
</reference>
<reference key="16">
    <citation type="journal article" date="2010" name="Blood">
        <title>Perforin activates clathrin- and dynamin-dependent endocytosis, which is required for plasma membrane repair and delivery of granzyme B for granzyme-mediated apoptosis.</title>
        <authorList>
            <person name="Thiery J."/>
            <person name="Keefe D."/>
            <person name="Saffarian S."/>
            <person name="Martinvalet D."/>
            <person name="Walch M."/>
            <person name="Boucrot E."/>
            <person name="Kirchhausen T."/>
            <person name="Lieberman J."/>
        </authorList>
    </citation>
    <scope>SUBCELLULAR LOCATION</scope>
</reference>
<reference key="17">
    <citation type="journal article" date="2013" name="Mol. Biol. Cell">
        <title>Arf-like GTPase Arl8b regulates lytic granule polarization and natural killer cell-mediated cytotoxicity.</title>
        <authorList>
            <person name="Tuli A."/>
            <person name="Thiery J."/>
            <person name="James A.M."/>
            <person name="Michelet X."/>
            <person name="Sharma M."/>
            <person name="Garg S."/>
            <person name="Sanborn K.B."/>
            <person name="Orange J.S."/>
            <person name="Lieberman J."/>
            <person name="Brenner M.B."/>
        </authorList>
    </citation>
    <scope>SUBCELLULAR LOCATION</scope>
</reference>
<reference key="18">
    <citation type="journal article" date="2020" name="Nature">
        <title>Gasdermin E suppresses tumour growth by activating anti-tumour immunity.</title>
        <authorList>
            <person name="Zhang Z."/>
            <person name="Zhang Y."/>
            <person name="Xia S."/>
            <person name="Kong Q."/>
            <person name="Li S."/>
            <person name="Liu X."/>
            <person name="Junqueira C."/>
            <person name="Meza-Sosa K.F."/>
            <person name="Mok T.M.Y."/>
            <person name="Ansara J."/>
            <person name="Sengupta S."/>
            <person name="Yao Y."/>
            <person name="Wu H."/>
            <person name="Lieberman J."/>
        </authorList>
    </citation>
    <scope>FUNCTION</scope>
    <scope>CATALYTIC ACTIVITY</scope>
</reference>
<reference key="19">
    <citation type="journal article" date="2020" name="Sci. Immunol.">
        <title>Gasdermin E-mediated target cell pyroptosis by CAR T cells triggers cytokine release syndrome.</title>
        <authorList>
            <person name="Liu Y."/>
            <person name="Fang Y."/>
            <person name="Chen X."/>
            <person name="Wang Z."/>
            <person name="Liang X."/>
            <person name="Zhang T."/>
            <person name="Liu M."/>
            <person name="Zhou N."/>
            <person name="Lv J."/>
            <person name="Tang K."/>
            <person name="Xie J."/>
            <person name="Gao Y."/>
            <person name="Cheng F."/>
            <person name="Zhou Y."/>
            <person name="Zhang Z."/>
            <person name="Hu Y."/>
            <person name="Zhang X."/>
            <person name="Gao Q."/>
            <person name="Zhang Y."/>
            <person name="Huang B."/>
        </authorList>
    </citation>
    <scope>FUNCTION</scope>
</reference>
<reference key="20">
    <citation type="journal article" date="2000" name="Biol. Chem.">
        <title>Crystal structure of the caspase activator human granzyme B, a proteinase highly specific for an Asp-P1 residue.</title>
        <authorList>
            <person name="Estebanez-Perpina E."/>
            <person name="Fuentes-Prior P."/>
            <person name="Belorgey D."/>
            <person name="Braun M."/>
            <person name="Kiefersauer R."/>
            <person name="Maskos K."/>
            <person name="Huber R."/>
            <person name="Rubin H."/>
            <person name="Bode W."/>
        </authorList>
    </citation>
    <scope>X-RAY CRYSTALLOGRAPHY (3.1 ANGSTROMS) OF 21-247</scope>
</reference>
<reference key="21">
    <citation type="journal article" date="2001" name="Chem. Biol.">
        <title>The three-dimensional structure of human granzyme B compared to caspase-3, key mediators of cell death with cleavage specificity for aspartic acid in P1.</title>
        <authorList>
            <person name="Rotonda J."/>
            <person name="Garcia-Calvo M."/>
            <person name="Bull H.G."/>
            <person name="Geissler W.M."/>
            <person name="McKeever B.M."/>
            <person name="Willoughby C.A."/>
            <person name="Thornberry N.A."/>
            <person name="Becker J.W."/>
        </authorList>
    </citation>
    <scope>X-RAY CRYSTALLOGRAPHY (2.0 ANGSTROMS) OF 21-247</scope>
    <scope>GLYCOSYLATION AT ASN-71 AND ASN-104</scope>
</reference>
<reference key="22">
    <citation type="journal article" date="2003" name="J. Hum. Genet.">
        <title>Catalog of 680 variations among eight cytochrome p450 (CYP) genes, nine esterase genes, and two other genes in the Japanese population.</title>
        <authorList>
            <person name="Saito S."/>
            <person name="Iida A."/>
            <person name="Sekine A."/>
            <person name="Kawauchi S."/>
            <person name="Higuchi S."/>
            <person name="Ogawa C."/>
            <person name="Nakamura Y."/>
        </authorList>
    </citation>
    <scope>VARIANTS GLN-55 AND HIS-247</scope>
</reference>
<evidence type="ECO:0000250" key="1">
    <source>
        <dbReference type="UniProtKB" id="P04187"/>
    </source>
</evidence>
<evidence type="ECO:0000250" key="2">
    <source>
        <dbReference type="UniProtKB" id="P18291"/>
    </source>
</evidence>
<evidence type="ECO:0000255" key="3">
    <source>
        <dbReference type="PROSITE-ProRule" id="PRU00274"/>
    </source>
</evidence>
<evidence type="ECO:0000269" key="4">
    <source>
    </source>
</evidence>
<evidence type="ECO:0000269" key="5">
    <source>
    </source>
</evidence>
<evidence type="ECO:0000269" key="6">
    <source>
    </source>
</evidence>
<evidence type="ECO:0000269" key="7">
    <source>
    </source>
</evidence>
<evidence type="ECO:0000269" key="8">
    <source>
    </source>
</evidence>
<evidence type="ECO:0000269" key="9">
    <source>
    </source>
</evidence>
<evidence type="ECO:0000269" key="10">
    <source>
    </source>
</evidence>
<evidence type="ECO:0000269" key="11">
    <source>
    </source>
</evidence>
<evidence type="ECO:0000269" key="12">
    <source>
    </source>
</evidence>
<evidence type="ECO:0000269" key="13">
    <source>
    </source>
</evidence>
<evidence type="ECO:0000269" key="14">
    <source>
    </source>
</evidence>
<evidence type="ECO:0000269" key="15">
    <source>
    </source>
</evidence>
<evidence type="ECO:0000269" key="16">
    <source>
    </source>
</evidence>
<evidence type="ECO:0000269" key="17">
    <source>
    </source>
</evidence>
<evidence type="ECO:0000269" key="18">
    <source>
    </source>
</evidence>
<evidence type="ECO:0000269" key="19">
    <source>
    </source>
</evidence>
<evidence type="ECO:0000269" key="20">
    <source>
    </source>
</evidence>
<evidence type="ECO:0000269" key="21">
    <source>
    </source>
</evidence>
<evidence type="ECO:0000269" key="22">
    <source>
    </source>
</evidence>
<evidence type="ECO:0000269" key="23">
    <source>
    </source>
</evidence>
<evidence type="ECO:0000303" key="24">
    <source>
    </source>
</evidence>
<evidence type="ECO:0000303" key="25">
    <source>
    </source>
</evidence>
<evidence type="ECO:0000303" key="26">
    <source>
    </source>
</evidence>
<evidence type="ECO:0000305" key="27"/>
<evidence type="ECO:0000312" key="28">
    <source>
        <dbReference type="HGNC" id="HGNC:4709"/>
    </source>
</evidence>
<evidence type="ECO:0007829" key="29">
    <source>
        <dbReference type="PDB" id="1FQ3"/>
    </source>
</evidence>
<evidence type="ECO:0007829" key="30">
    <source>
        <dbReference type="PDB" id="1IAU"/>
    </source>
</evidence>
<protein>
    <recommendedName>
        <fullName evidence="24">Granzyme B</fullName>
        <ecNumber evidence="9 17 22 23">3.4.21.79</ecNumber>
    </recommendedName>
    <alternativeName>
        <fullName>C11</fullName>
    </alternativeName>
    <alternativeName>
        <fullName evidence="24">CTLA-1</fullName>
    </alternativeName>
    <alternativeName>
        <fullName>Cathepsin G-like 1</fullName>
        <shortName>CTSGL1</shortName>
    </alternativeName>
    <alternativeName>
        <fullName>Cytotoxic T-lymphocyte proteinase 2</fullName>
        <shortName>Lymphocyte protease</shortName>
    </alternativeName>
    <alternativeName>
        <fullName>Fragmentin-2</fullName>
    </alternativeName>
    <alternativeName>
        <fullName>Granzyme-2</fullName>
    </alternativeName>
    <alternativeName>
        <fullName>Human lymphocyte protein</fullName>
        <shortName>HLP</shortName>
    </alternativeName>
    <alternativeName>
        <fullName>SECT</fullName>
    </alternativeName>
    <alternativeName>
        <fullName>T-cell serine protease 1-3E</fullName>
    </alternativeName>
</protein>
<comment type="function">
    <text evidence="1 9 16 17 20 21 22 23">Abundant protease in the cytosolic granules of cytotoxic T-cells and NK-cells which activates caspase-independent pyroptosis when delivered into the target cell through the immunological synapse (PubMed:1985927, PubMed:3262682, PubMed:3263427). It cleaves after Asp (PubMed:1985927, PubMed:8258716). Once delivered into the target cell, acts by catalyzing cleavage of gasdermin-E (GSDME), releasing the pore-forming moiety of GSDME, thereby triggering pyroptosis and target cell death (PubMed:31953257, PubMed:32188940). Seems to be linked to an activation cascade of caspases (aspartate-specific cysteine proteases) responsible for apoptosis execution. Cleaves caspase-3, -9 and -10 (CASP3, CASP9 and CASP10, respectively) to give rise to active enzymes mediating apoptosis (PubMed:9852092). Cleaves and activates CASP7 in response to bacterial infection, promoting plasma membrane repair (By similarity).</text>
</comment>
<comment type="catalytic activity">
    <reaction evidence="9 17 22 23">
        <text>Preferential cleavage: -Asp-|-Xaa- &gt;&gt; -Asn-|-Xaa- &gt; -Met-|-Xaa-, -Ser-|-Xaa-.</text>
        <dbReference type="EC" id="3.4.21.79"/>
    </reaction>
</comment>
<comment type="activity regulation">
    <text evidence="22">Inactivated by the serine protease inhibitor diisopropylfluorophosphate.</text>
</comment>
<comment type="interaction">
    <interactant intactId="EBI-2505785">
        <id>P10144</id>
    </interactant>
    <interactant intactId="EBI-724466">
        <id>P14222</id>
        <label>PRF1</label>
    </interactant>
    <organismsDiffer>false</organismsDiffer>
    <experiments>3</experiments>
</comment>
<comment type="interaction">
    <interactant intactId="EBI-2505785">
        <id>P10144</id>
    </interactant>
    <interactant intactId="EBI-744915">
        <id>P10124</id>
        <label>SRGN</label>
    </interactant>
    <organismsDiffer>false</organismsDiffer>
    <experiments>2</experiments>
</comment>
<comment type="subcellular location">
    <subcellularLocation>
        <location evidence="10 22">Secreted</location>
    </subcellularLocation>
    <subcellularLocation>
        <location evidence="9 13 22">Cytolytic granule</location>
    </subcellularLocation>
    <text evidence="10 22">Delivered into the target cell by perforin (PubMed:20038786).</text>
</comment>
<comment type="induction">
    <text>By staphylococcal enterotoxin A (SEA) in peripheral blood leukocytes.</text>
</comment>
<comment type="similarity">
    <text evidence="3">Belongs to the peptidase S1 family. Granzyme subfamily.</text>
</comment>
<organism>
    <name type="scientific">Homo sapiens</name>
    <name type="common">Human</name>
    <dbReference type="NCBI Taxonomy" id="9606"/>
    <lineage>
        <taxon>Eukaryota</taxon>
        <taxon>Metazoa</taxon>
        <taxon>Chordata</taxon>
        <taxon>Craniata</taxon>
        <taxon>Vertebrata</taxon>
        <taxon>Euteleostomi</taxon>
        <taxon>Mammalia</taxon>
        <taxon>Eutheria</taxon>
        <taxon>Euarchontoglires</taxon>
        <taxon>Primates</taxon>
        <taxon>Haplorrhini</taxon>
        <taxon>Catarrhini</taxon>
        <taxon>Hominidae</taxon>
        <taxon>Homo</taxon>
    </lineage>
</organism>
<gene>
    <name evidence="25 28" type="primary">GZMB</name>
    <name type="synonym">CGL1</name>
    <name type="synonym">CSPB</name>
    <name evidence="24" type="synonym">CTLA1</name>
    <name evidence="26" type="synonym">GRB</name>
</gene>
<sequence length="247" mass="27716">MQPILLLLAFLLLPRADAGEIIGGHEAKPHSRPYMAYLMIWDQKSLKRCGGFLIRDDFVLTAAHCWGSSINVTLGAHNIKEQEPTQQFIPVKRPIPHPAYNPKNFSNDIMLLQLERKAKRTRAVQPLRLPSNKAQVKPGQTCSVAGWGQTAPLGKHSHTLQEVKMTVQEDRKCESDLRHYYDSTIELCVGDPEIKKTSFKGDSGGPLVCNKVAQGIVSYGRNNGMPPRACTKVSSFVHWIKKTMKRY</sequence>
<proteinExistence type="evidence at protein level"/>
<dbReference type="EC" id="3.4.21.79" evidence="9 17 22 23"/>
<dbReference type="EMBL" id="M17016">
    <property type="protein sequence ID" value="AAA36627.1"/>
    <property type="molecule type" value="mRNA"/>
</dbReference>
<dbReference type="EMBL" id="J03189">
    <property type="protein sequence ID" value="AAA36603.1"/>
    <property type="molecule type" value="mRNA"/>
</dbReference>
<dbReference type="EMBL" id="J04071">
    <property type="protein sequence ID" value="AAA52118.1"/>
    <property type="molecule type" value="mRNA"/>
</dbReference>
<dbReference type="EMBL" id="J03072">
    <property type="protein sequence ID" value="AAB59528.1"/>
    <property type="molecule type" value="Genomic_DNA"/>
</dbReference>
<dbReference type="EMBL" id="M38193">
    <property type="protein sequence ID" value="AAA67124.1"/>
    <property type="molecule type" value="Genomic_DNA"/>
</dbReference>
<dbReference type="EMBL" id="M28879">
    <property type="protein sequence ID" value="AAA75490.1"/>
    <property type="molecule type" value="Genomic_DNA"/>
</dbReference>
<dbReference type="EMBL" id="AL136018">
    <property type="status" value="NOT_ANNOTATED_CDS"/>
    <property type="molecule type" value="Genomic_DNA"/>
</dbReference>
<dbReference type="EMBL" id="BC030195">
    <property type="protein sequence ID" value="AAH30195.1"/>
    <property type="molecule type" value="mRNA"/>
</dbReference>
<dbReference type="CCDS" id="CCDS9633.1"/>
<dbReference type="PIR" id="A61021">
    <property type="entry name" value="A61021"/>
</dbReference>
<dbReference type="RefSeq" id="NP_004122.2">
    <property type="nucleotide sequence ID" value="NM_004131.6"/>
</dbReference>
<dbReference type="PDB" id="1FQ3">
    <property type="method" value="X-ray"/>
    <property type="resolution" value="3.10 A"/>
    <property type="chains" value="A/B=21-247"/>
</dbReference>
<dbReference type="PDB" id="1IAU">
    <property type="method" value="X-ray"/>
    <property type="resolution" value="2.00 A"/>
    <property type="chains" value="A=21-247"/>
</dbReference>
<dbReference type="PDBsum" id="1FQ3"/>
<dbReference type="PDBsum" id="1IAU"/>
<dbReference type="SMR" id="P10144"/>
<dbReference type="BioGRID" id="109257">
    <property type="interactions" value="30"/>
</dbReference>
<dbReference type="FunCoup" id="P10144">
    <property type="interactions" value="341"/>
</dbReference>
<dbReference type="IntAct" id="P10144">
    <property type="interactions" value="6"/>
</dbReference>
<dbReference type="MINT" id="P10144"/>
<dbReference type="STRING" id="9606.ENSP00000216341"/>
<dbReference type="BindingDB" id="P10144"/>
<dbReference type="ChEMBL" id="CHEMBL2316"/>
<dbReference type="GuidetoPHARMACOLOGY" id="2369"/>
<dbReference type="MEROPS" id="S01.010"/>
<dbReference type="GlyCosmos" id="P10144">
    <property type="glycosylation" value="3 sites, 2 glycans"/>
</dbReference>
<dbReference type="GlyGen" id="P10144">
    <property type="glycosylation" value="3 sites, 2 O-linked glycans (1 site)"/>
</dbReference>
<dbReference type="iPTMnet" id="P10144"/>
<dbReference type="PhosphoSitePlus" id="P10144"/>
<dbReference type="BioMuta" id="GZMB"/>
<dbReference type="DMDM" id="317373361"/>
<dbReference type="MassIVE" id="P10144"/>
<dbReference type="PaxDb" id="9606-ENSP00000216341"/>
<dbReference type="PeptideAtlas" id="P10144"/>
<dbReference type="ProteomicsDB" id="52569"/>
<dbReference type="ABCD" id="P10144">
    <property type="antibodies" value="3 sequenced antibodies"/>
</dbReference>
<dbReference type="Antibodypedia" id="187">
    <property type="antibodies" value="1247 antibodies from 51 providers"/>
</dbReference>
<dbReference type="DNASU" id="3002"/>
<dbReference type="Ensembl" id="ENST00000216341.9">
    <property type="protein sequence ID" value="ENSP00000216341.4"/>
    <property type="gene ID" value="ENSG00000100453.14"/>
</dbReference>
<dbReference type="GeneID" id="3002"/>
<dbReference type="KEGG" id="hsa:3002"/>
<dbReference type="MANE-Select" id="ENST00000216341.9">
    <property type="protein sequence ID" value="ENSP00000216341.4"/>
    <property type="RefSeq nucleotide sequence ID" value="NM_004131.6"/>
    <property type="RefSeq protein sequence ID" value="NP_004122.2"/>
</dbReference>
<dbReference type="UCSC" id="uc001wps.4">
    <property type="organism name" value="human"/>
</dbReference>
<dbReference type="AGR" id="HGNC:4709"/>
<dbReference type="CTD" id="3002"/>
<dbReference type="DisGeNET" id="3002"/>
<dbReference type="GeneCards" id="GZMB"/>
<dbReference type="HGNC" id="HGNC:4709">
    <property type="gene designation" value="GZMB"/>
</dbReference>
<dbReference type="HPA" id="ENSG00000100453">
    <property type="expression patterns" value="Tissue enhanced (bone marrow, lymphoid tissue)"/>
</dbReference>
<dbReference type="MIM" id="123910">
    <property type="type" value="gene"/>
</dbReference>
<dbReference type="neXtProt" id="NX_P10144"/>
<dbReference type="OpenTargets" id="ENSG00000100453"/>
<dbReference type="VEuPathDB" id="HostDB:ENSG00000100453"/>
<dbReference type="eggNOG" id="KOG3627">
    <property type="taxonomic scope" value="Eukaryota"/>
</dbReference>
<dbReference type="GeneTree" id="ENSGT01030000234551"/>
<dbReference type="HOGENOM" id="CLU_006842_1_0_1"/>
<dbReference type="InParanoid" id="P10144"/>
<dbReference type="OMA" id="PAYNPEK"/>
<dbReference type="OrthoDB" id="5565075at2759"/>
<dbReference type="PAN-GO" id="P10144">
    <property type="GO annotations" value="2 GO annotations based on evolutionary models"/>
</dbReference>
<dbReference type="PhylomeDB" id="P10144"/>
<dbReference type="TreeFam" id="TF333630"/>
<dbReference type="BRENDA" id="3.4.21.79">
    <property type="organism ID" value="2681"/>
</dbReference>
<dbReference type="PathwayCommons" id="P10144"/>
<dbReference type="Reactome" id="R-HSA-2197563">
    <property type="pathway name" value="NOTCH2 intracellular domain regulates transcription"/>
</dbReference>
<dbReference type="Reactome" id="R-HSA-5620971">
    <property type="pathway name" value="Pyroptosis"/>
</dbReference>
<dbReference type="Reactome" id="R-HSA-75108">
    <property type="pathway name" value="Activation, myristolyation of BID and translocation to mitochondria"/>
</dbReference>
<dbReference type="Reactome" id="R-HSA-9725371">
    <property type="pathway name" value="Nuclear events stimulated by ALK signaling in cancer"/>
</dbReference>
<dbReference type="SignaLink" id="P10144"/>
<dbReference type="SIGNOR" id="P10144"/>
<dbReference type="BioGRID-ORCS" id="3002">
    <property type="hits" value="13 hits in 1156 CRISPR screens"/>
</dbReference>
<dbReference type="ChiTaRS" id="GZMB">
    <property type="organism name" value="human"/>
</dbReference>
<dbReference type="EvolutionaryTrace" id="P10144"/>
<dbReference type="GeneWiki" id="GZMB"/>
<dbReference type="GenomeRNAi" id="3002"/>
<dbReference type="Pharos" id="P10144">
    <property type="development level" value="Tchem"/>
</dbReference>
<dbReference type="PRO" id="PR:P10144"/>
<dbReference type="Proteomes" id="UP000005640">
    <property type="component" value="Chromosome 14"/>
</dbReference>
<dbReference type="RNAct" id="P10144">
    <property type="molecule type" value="protein"/>
</dbReference>
<dbReference type="Bgee" id="ENSG00000100453">
    <property type="expression patterns" value="Expressed in granulocyte and 127 other cell types or tissues"/>
</dbReference>
<dbReference type="ExpressionAtlas" id="P10144">
    <property type="expression patterns" value="baseline and differential"/>
</dbReference>
<dbReference type="GO" id="GO:0044194">
    <property type="term" value="C:cytolytic granule"/>
    <property type="evidence" value="ECO:0000314"/>
    <property type="project" value="UniProtKB"/>
</dbReference>
<dbReference type="GO" id="GO:1904856">
    <property type="term" value="C:cytolytic granule lumen"/>
    <property type="evidence" value="ECO:0000304"/>
    <property type="project" value="Reactome"/>
</dbReference>
<dbReference type="GO" id="GO:0005737">
    <property type="term" value="C:cytoplasm"/>
    <property type="evidence" value="ECO:0000314"/>
    <property type="project" value="UniProt"/>
</dbReference>
<dbReference type="GO" id="GO:0005829">
    <property type="term" value="C:cytosol"/>
    <property type="evidence" value="ECO:0000304"/>
    <property type="project" value="Reactome"/>
</dbReference>
<dbReference type="GO" id="GO:0005615">
    <property type="term" value="C:extracellular space"/>
    <property type="evidence" value="ECO:0000318"/>
    <property type="project" value="GO_Central"/>
</dbReference>
<dbReference type="GO" id="GO:0001772">
    <property type="term" value="C:immunological synapse"/>
    <property type="evidence" value="ECO:0000304"/>
    <property type="project" value="UniProtKB"/>
</dbReference>
<dbReference type="GO" id="GO:0016020">
    <property type="term" value="C:membrane"/>
    <property type="evidence" value="ECO:0007005"/>
    <property type="project" value="UniProtKB"/>
</dbReference>
<dbReference type="GO" id="GO:0005634">
    <property type="term" value="C:nucleus"/>
    <property type="evidence" value="ECO:0000304"/>
    <property type="project" value="UniProtKB"/>
</dbReference>
<dbReference type="GO" id="GO:0004252">
    <property type="term" value="F:serine-type endopeptidase activity"/>
    <property type="evidence" value="ECO:0000314"/>
    <property type="project" value="UniProtKB"/>
</dbReference>
<dbReference type="GO" id="GO:0008236">
    <property type="term" value="F:serine-type peptidase activity"/>
    <property type="evidence" value="ECO:0000304"/>
    <property type="project" value="ProtInc"/>
</dbReference>
<dbReference type="GO" id="GO:0006915">
    <property type="term" value="P:apoptotic process"/>
    <property type="evidence" value="ECO:0000304"/>
    <property type="project" value="UniProtKB"/>
</dbReference>
<dbReference type="GO" id="GO:0140507">
    <property type="term" value="P:granzyme-mediated programmed cell death signaling pathway"/>
    <property type="evidence" value="ECO:0000314"/>
    <property type="project" value="UniProtKB"/>
</dbReference>
<dbReference type="GO" id="GO:0031640">
    <property type="term" value="P:killing of cells of another organism"/>
    <property type="evidence" value="ECO:0007669"/>
    <property type="project" value="UniProtKB-KW"/>
</dbReference>
<dbReference type="GO" id="GO:0042267">
    <property type="term" value="P:natural killer cell mediated cytotoxicity"/>
    <property type="evidence" value="ECO:0000314"/>
    <property type="project" value="UniProtKB"/>
</dbReference>
<dbReference type="GO" id="GO:0017148">
    <property type="term" value="P:negative regulation of translation"/>
    <property type="evidence" value="ECO:0000314"/>
    <property type="project" value="CACAO"/>
</dbReference>
<dbReference type="GO" id="GO:1903749">
    <property type="term" value="P:positive regulation of establishment of protein localization to mitochondrion"/>
    <property type="evidence" value="ECO:0000304"/>
    <property type="project" value="Reactome"/>
</dbReference>
<dbReference type="GO" id="GO:0051604">
    <property type="term" value="P:protein maturation"/>
    <property type="evidence" value="ECO:0000314"/>
    <property type="project" value="UniProt"/>
</dbReference>
<dbReference type="GO" id="GO:0051603">
    <property type="term" value="P:proteolysis involved in protein catabolic process"/>
    <property type="evidence" value="ECO:0000314"/>
    <property type="project" value="UniProtKB"/>
</dbReference>
<dbReference type="GO" id="GO:0070269">
    <property type="term" value="P:pyroptotic inflammatory response"/>
    <property type="evidence" value="ECO:0000314"/>
    <property type="project" value="UniProtKB"/>
</dbReference>
<dbReference type="CDD" id="cd00190">
    <property type="entry name" value="Tryp_SPc"/>
    <property type="match status" value="1"/>
</dbReference>
<dbReference type="FunFam" id="2.40.10.10:FF:000014">
    <property type="entry name" value="Complement factor D"/>
    <property type="match status" value="1"/>
</dbReference>
<dbReference type="Gene3D" id="2.40.10.10">
    <property type="entry name" value="Trypsin-like serine proteases"/>
    <property type="match status" value="2"/>
</dbReference>
<dbReference type="InterPro" id="IPR009003">
    <property type="entry name" value="Peptidase_S1_PA"/>
</dbReference>
<dbReference type="InterPro" id="IPR043504">
    <property type="entry name" value="Peptidase_S1_PA_chymotrypsin"/>
</dbReference>
<dbReference type="InterPro" id="IPR001314">
    <property type="entry name" value="Peptidase_S1A"/>
</dbReference>
<dbReference type="InterPro" id="IPR001254">
    <property type="entry name" value="Trypsin_dom"/>
</dbReference>
<dbReference type="InterPro" id="IPR018114">
    <property type="entry name" value="TRYPSIN_HIS"/>
</dbReference>
<dbReference type="InterPro" id="IPR033116">
    <property type="entry name" value="TRYPSIN_SER"/>
</dbReference>
<dbReference type="PANTHER" id="PTHR24271:SF81">
    <property type="entry name" value="GRANZYME B"/>
    <property type="match status" value="1"/>
</dbReference>
<dbReference type="PANTHER" id="PTHR24271">
    <property type="entry name" value="KALLIKREIN-RELATED"/>
    <property type="match status" value="1"/>
</dbReference>
<dbReference type="Pfam" id="PF00089">
    <property type="entry name" value="Trypsin"/>
    <property type="match status" value="1"/>
</dbReference>
<dbReference type="PRINTS" id="PR00722">
    <property type="entry name" value="CHYMOTRYPSIN"/>
</dbReference>
<dbReference type="SMART" id="SM00020">
    <property type="entry name" value="Tryp_SPc"/>
    <property type="match status" value="1"/>
</dbReference>
<dbReference type="SUPFAM" id="SSF50494">
    <property type="entry name" value="Trypsin-like serine proteases"/>
    <property type="match status" value="1"/>
</dbReference>
<dbReference type="PROSITE" id="PS50240">
    <property type="entry name" value="TRYPSIN_DOM"/>
    <property type="match status" value="1"/>
</dbReference>
<dbReference type="PROSITE" id="PS00134">
    <property type="entry name" value="TRYPSIN_HIS"/>
    <property type="match status" value="1"/>
</dbReference>
<dbReference type="PROSITE" id="PS00135">
    <property type="entry name" value="TRYPSIN_SER"/>
    <property type="match status" value="1"/>
</dbReference>
<feature type="signal peptide" evidence="7">
    <location>
        <begin position="1"/>
        <end position="18"/>
    </location>
</feature>
<feature type="propeptide" id="PRO_0000027399" description="Activation peptide" evidence="9 20 21 22">
    <location>
        <begin position="19"/>
        <end position="20"/>
    </location>
</feature>
<feature type="chain" id="PRO_0000027400" description="Granzyme B">
    <location>
        <begin position="21"/>
        <end position="247"/>
    </location>
</feature>
<feature type="domain" description="Peptidase S1" evidence="3">
    <location>
        <begin position="21"/>
        <end position="245"/>
    </location>
</feature>
<feature type="active site" description="Charge relay system" evidence="4 5">
    <location>
        <position position="64"/>
    </location>
</feature>
<feature type="active site" description="Charge relay system" evidence="4 5">
    <location>
        <position position="108"/>
    </location>
</feature>
<feature type="active site" description="Charge relay system" evidence="4 5">
    <location>
        <position position="203"/>
    </location>
</feature>
<feature type="site" description="Mediates preference for Asp-containing substrates" evidence="2">
    <location>
        <position position="228"/>
    </location>
</feature>
<feature type="glycosylation site" description="N-linked (GlcNAc...) asparagine" evidence="5">
    <location>
        <position position="71"/>
    </location>
</feature>
<feature type="glycosylation site" description="N-linked (GlcNAc...) asparagine" evidence="5">
    <location>
        <position position="104"/>
    </location>
</feature>
<feature type="disulfide bond" evidence="4 5">
    <location>
        <begin position="49"/>
        <end position="65"/>
    </location>
</feature>
<feature type="disulfide bond" evidence="4 5">
    <location>
        <begin position="142"/>
        <end position="209"/>
    </location>
</feature>
<feature type="disulfide bond" evidence="4 5">
    <location>
        <begin position="173"/>
        <end position="188"/>
    </location>
</feature>
<feature type="sequence variant" id="VAR_018371" description="In dbSNP:rs8192917." evidence="6 8 11 12 14 15 19">
    <original>R</original>
    <variation>Q</variation>
    <location>
        <position position="55"/>
    </location>
</feature>
<feature type="sequence variant" id="VAR_047409" description="In dbSNP:rs11539752." evidence="11 18">
    <original>P</original>
    <variation>A</variation>
    <location>
        <position position="94"/>
    </location>
</feature>
<feature type="sequence variant" id="VAR_018381" description="In dbSNP:rs2236338." evidence="6 8">
    <original>Y</original>
    <variation>H</variation>
    <location>
        <position position="247"/>
    </location>
</feature>
<feature type="sequence conflict" description="In Ref. 12; AA sequence." evidence="27" ref="12">
    <original>RP</original>
    <variation>PR</variation>
    <location>
        <begin position="32"/>
        <end position="33"/>
    </location>
</feature>
<feature type="sequence conflict" description="In Ref. 3; AAA52118." evidence="27" ref="3">
    <original>V</original>
    <variation>G</variation>
    <location>
        <position position="72"/>
    </location>
</feature>
<feature type="sequence conflict" description="In Ref. 4; AAB59528." evidence="27" ref="4">
    <original>V</original>
    <variation>C</variation>
    <location>
        <position position="212"/>
    </location>
</feature>
<feature type="strand" evidence="30">
    <location>
        <begin position="35"/>
        <end position="41"/>
    </location>
</feature>
<feature type="strand" evidence="30">
    <location>
        <begin position="46"/>
        <end position="55"/>
    </location>
</feature>
<feature type="strand" evidence="30">
    <location>
        <begin position="58"/>
        <end position="61"/>
    </location>
</feature>
<feature type="helix" evidence="30">
    <location>
        <begin position="63"/>
        <end position="65"/>
    </location>
</feature>
<feature type="strand" evidence="30">
    <location>
        <begin position="68"/>
        <end position="75"/>
    </location>
</feature>
<feature type="turn" evidence="29">
    <location>
        <begin position="79"/>
        <end position="82"/>
    </location>
</feature>
<feature type="strand" evidence="30">
    <location>
        <begin position="87"/>
        <end position="96"/>
    </location>
</feature>
<feature type="turn" evidence="30">
    <location>
        <begin position="102"/>
        <end position="104"/>
    </location>
</feature>
<feature type="strand" evidence="30">
    <location>
        <begin position="110"/>
        <end position="116"/>
    </location>
</feature>
<feature type="strand" evidence="30">
    <location>
        <begin position="141"/>
        <end position="148"/>
    </location>
</feature>
<feature type="strand" evidence="30">
    <location>
        <begin position="150"/>
        <end position="154"/>
    </location>
</feature>
<feature type="strand" evidence="30">
    <location>
        <begin position="161"/>
        <end position="167"/>
    </location>
</feature>
<feature type="helix" evidence="30">
    <location>
        <begin position="170"/>
        <end position="176"/>
    </location>
</feature>
<feature type="turn" evidence="30">
    <location>
        <begin position="177"/>
        <end position="180"/>
    </location>
</feature>
<feature type="turn" evidence="30">
    <location>
        <begin position="183"/>
        <end position="185"/>
    </location>
</feature>
<feature type="strand" evidence="30">
    <location>
        <begin position="186"/>
        <end position="190"/>
    </location>
</feature>
<feature type="strand" evidence="30">
    <location>
        <begin position="205"/>
        <end position="209"/>
    </location>
</feature>
<feature type="strand" evidence="30">
    <location>
        <begin position="212"/>
        <end position="220"/>
    </location>
</feature>
<feature type="strand" evidence="30">
    <location>
        <begin position="228"/>
        <end position="232"/>
    </location>
</feature>
<feature type="helix" evidence="30">
    <location>
        <begin position="233"/>
        <end position="236"/>
    </location>
</feature>
<feature type="helix" evidence="30">
    <location>
        <begin position="237"/>
        <end position="245"/>
    </location>
</feature>
<keyword id="KW-0002">3D-structure</keyword>
<keyword id="KW-0053">Apoptosis</keyword>
<keyword id="KW-0204">Cytolysis</keyword>
<keyword id="KW-0903">Direct protein sequencing</keyword>
<keyword id="KW-1015">Disulfide bond</keyword>
<keyword id="KW-0325">Glycoprotein</keyword>
<keyword id="KW-0378">Hydrolase</keyword>
<keyword id="KW-0458">Lysosome</keyword>
<keyword id="KW-0645">Protease</keyword>
<keyword id="KW-1267">Proteomics identification</keyword>
<keyword id="KW-1185">Reference proteome</keyword>
<keyword id="KW-0964">Secreted</keyword>
<keyword id="KW-0720">Serine protease</keyword>
<keyword id="KW-0732">Signal</keyword>
<keyword id="KW-0865">Zymogen</keyword>